<protein>
    <recommendedName>
        <fullName>Twisted gastrulation protein homolog 1</fullName>
    </recommendedName>
</protein>
<reference key="1">
    <citation type="journal article" date="2001" name="Nature">
        <title>Homologues of Twisted gastrulation are extracellular cofactors in antagonism of BMP signalling.</title>
        <authorList>
            <person name="Scott I.C."/>
            <person name="Blitz I.L."/>
            <person name="Pappano W.N."/>
            <person name="Maas S.A."/>
            <person name="Cho K.W.Y."/>
            <person name="Greenspan D.S."/>
        </authorList>
    </citation>
    <scope>NUCLEOTIDE SEQUENCE [MRNA]</scope>
</reference>
<reference key="2">
    <citation type="journal article" date="2001" name="Nature">
        <authorList>
            <person name="Scott I.C."/>
            <person name="Blitz I.L."/>
            <person name="Pappano W.N."/>
            <person name="Maas S.A."/>
            <person name="Cho K.W.Y."/>
            <person name="Greenspan D.S."/>
        </authorList>
    </citation>
    <scope>ERRATUM OF PUBMED:11260715</scope>
</reference>
<name>TWSG1_CHICK</name>
<comment type="function">
    <text evidence="1">May be involved in dorsoventral axis formation. Seems to antagonize BMP signaling by forming ternary complexes with CHRD and BMPs, thereby preventing BMPs from binding to their receptors. In addition to the anti-BMP function, also has pro-BMP activity, partly mediated by cleavage and degradation of CHRD, which releases BMPs from ternary complexes. May be an important modulator of BMP-regulated cartilage development and chondrocyte differentiation. May play a role in thymocyte development (By similarity).</text>
</comment>
<comment type="subunit">
    <text evidence="1">Interacts with CHRD and BMP4. This interaction enhances CHRD/BMP4 complex formation. Interacts with BMP7 (By similarity).</text>
</comment>
<comment type="subcellular location">
    <subcellularLocation>
        <location evidence="1">Secreted</location>
    </subcellularLocation>
</comment>
<comment type="domain">
    <text evidence="1">The N-terminal domain is sufficient to interact with BMP4.</text>
</comment>
<comment type="similarity">
    <text evidence="3">Belongs to the twisted gastrulation protein family.</text>
</comment>
<accession>Q98T89</accession>
<keyword id="KW-0217">Developmental protein</keyword>
<keyword id="KW-0325">Glycoprotein</keyword>
<keyword id="KW-1185">Reference proteome</keyword>
<keyword id="KW-0964">Secreted</keyword>
<keyword id="KW-0732">Signal</keyword>
<organism>
    <name type="scientific">Gallus gallus</name>
    <name type="common">Chicken</name>
    <dbReference type="NCBI Taxonomy" id="9031"/>
    <lineage>
        <taxon>Eukaryota</taxon>
        <taxon>Metazoa</taxon>
        <taxon>Chordata</taxon>
        <taxon>Craniata</taxon>
        <taxon>Vertebrata</taxon>
        <taxon>Euteleostomi</taxon>
        <taxon>Archelosauria</taxon>
        <taxon>Archosauria</taxon>
        <taxon>Dinosauria</taxon>
        <taxon>Saurischia</taxon>
        <taxon>Theropoda</taxon>
        <taxon>Coelurosauria</taxon>
        <taxon>Aves</taxon>
        <taxon>Neognathae</taxon>
        <taxon>Galloanserae</taxon>
        <taxon>Galliformes</taxon>
        <taxon>Phasianidae</taxon>
        <taxon>Phasianinae</taxon>
        <taxon>Gallus</taxon>
    </lineage>
</organism>
<evidence type="ECO:0000250" key="1"/>
<evidence type="ECO:0000255" key="2"/>
<evidence type="ECO:0000305" key="3"/>
<sequence length="224" mass="24904">MRSPCAALSASLLLLLLLLWARSSVGCNKALCASDVSKCLIQELCQCRPGEGNCSCCKECMLCLGTLWDECCDCVGMCNPRNYSDTPPTSKSTVEELHEPIPSLFRALTEGDTQLNWNIVSFPVAEELSHHENLVSFLETVNQPQHQNVSVPSNNIHAPYSSDKEHMCTVVYFDDCMSIHQCKISCESMGASKYRWFHNACCECIGPECIDYGSKTVKCMNCMF</sequence>
<feature type="signal peptide" evidence="2">
    <location>
        <begin position="1"/>
        <end position="26"/>
    </location>
</feature>
<feature type="chain" id="PRO_0000278811" description="Twisted gastrulation protein homolog 1">
    <location>
        <begin position="27"/>
        <end position="224"/>
    </location>
</feature>
<feature type="glycosylation site" description="N-linked (GlcNAc...) asparagine" evidence="2">
    <location>
        <position position="53"/>
    </location>
</feature>
<feature type="glycosylation site" description="N-linked (GlcNAc...) asparagine" evidence="2">
    <location>
        <position position="82"/>
    </location>
</feature>
<feature type="glycosylation site" description="N-linked (GlcNAc...) asparagine" evidence="2">
    <location>
        <position position="148"/>
    </location>
</feature>
<proteinExistence type="evidence at transcript level"/>
<gene>
    <name type="primary">TWSG1</name>
    <name type="synonym">TSG</name>
</gene>
<dbReference type="EMBL" id="AF255731">
    <property type="protein sequence ID" value="AAK27324.1"/>
    <property type="molecule type" value="mRNA"/>
</dbReference>
<dbReference type="RefSeq" id="NP_989529.1">
    <property type="nucleotide sequence ID" value="NM_204198.1"/>
</dbReference>
<dbReference type="SMR" id="Q98T89"/>
<dbReference type="FunCoup" id="Q98T89">
    <property type="interactions" value="932"/>
</dbReference>
<dbReference type="STRING" id="9031.ENSGALP00000065324"/>
<dbReference type="GlyCosmos" id="Q98T89">
    <property type="glycosylation" value="3 sites, No reported glycans"/>
</dbReference>
<dbReference type="GlyGen" id="Q98T89">
    <property type="glycosylation" value="3 sites"/>
</dbReference>
<dbReference type="PaxDb" id="9031-ENSGALP00000013669"/>
<dbReference type="GeneID" id="374024"/>
<dbReference type="KEGG" id="gga:374024"/>
<dbReference type="CTD" id="57045"/>
<dbReference type="VEuPathDB" id="HostDB:geneid_374024"/>
<dbReference type="eggNOG" id="ENOG502QRE9">
    <property type="taxonomic scope" value="Eukaryota"/>
</dbReference>
<dbReference type="HOGENOM" id="CLU_082511_1_0_1"/>
<dbReference type="InParanoid" id="Q98T89"/>
<dbReference type="OrthoDB" id="10037323at2759"/>
<dbReference type="PhylomeDB" id="Q98T89"/>
<dbReference type="TreeFam" id="TF323922"/>
<dbReference type="PRO" id="PR:Q98T89"/>
<dbReference type="Proteomes" id="UP000000539">
    <property type="component" value="Chromosome 2"/>
</dbReference>
<dbReference type="Bgee" id="ENSGALG00000052629">
    <property type="expression patterns" value="Expressed in colon and 14 other cell types or tissues"/>
</dbReference>
<dbReference type="GO" id="GO:0005615">
    <property type="term" value="C:extracellular space"/>
    <property type="evidence" value="ECO:0000318"/>
    <property type="project" value="GO_Central"/>
</dbReference>
<dbReference type="GO" id="GO:0030510">
    <property type="term" value="P:regulation of BMP signaling pathway"/>
    <property type="evidence" value="ECO:0000318"/>
    <property type="project" value="GO_Central"/>
</dbReference>
<dbReference type="InterPro" id="IPR006761">
    <property type="entry name" value="Tsg"/>
</dbReference>
<dbReference type="PANTHER" id="PTHR12312:SF17">
    <property type="entry name" value="TWISTED GASTRULATION PROTEIN HOMOLOG 1"/>
    <property type="match status" value="1"/>
</dbReference>
<dbReference type="PANTHER" id="PTHR12312">
    <property type="entry name" value="TWISTED GASTRULATION PROTEIN HOMOLOG 1-A-RELATED"/>
    <property type="match status" value="1"/>
</dbReference>
<dbReference type="Pfam" id="PF04668">
    <property type="entry name" value="Tsg"/>
    <property type="match status" value="1"/>
</dbReference>
<dbReference type="Pfam" id="PF23782">
    <property type="entry name" value="Tsg_N"/>
    <property type="match status" value="1"/>
</dbReference>